<name>AMPA_RHOP5</name>
<accession>Q07LG0</accession>
<sequence length="498" mass="52277">MSDVVSVGFVPMSTSAKGLLVVFCDETLASGPDSRKALGTAVDAVKRAAETSRFKGKSGAALDILAPEGLKASRLVVIGIGKPADLKEHDFLKLGGTIASKLGSGKEAVTVIAELPAGPMSPAQAAALAAGVRLRAYKFDRYKTKKKDDDAPLDASVAIAVRDVAATKKAFAPQNGLVDGVNIARELVNEPPNVLYPAEFARRASQLSKLGVGIEVLDVPAMTKLKMGALLGVAQGSARPARTVIMRWNGGKKGAAPIAFVGKGVCFDTGGISIKPSASMEDMKGDMGGAACVVGLMHALAARKAKVNVIGAIGLVENMPDGNAQRPGDIVTSMSGQTIEIINTDAEGRLVLADVLWYVAKKHKPKFMVDLATLTGAIMVALGTEYAGLFSNNDELATRLNEVGLATGERVWRMPLGPEYDKQIDSQFADMKNTGSRNGGSITAAQFLQRFVDDTPWAHLDIAGTAMASPKSDINQSWGSGYGVRLLDRLVATHYESK</sequence>
<organism>
    <name type="scientific">Rhodopseudomonas palustris (strain BisA53)</name>
    <dbReference type="NCBI Taxonomy" id="316055"/>
    <lineage>
        <taxon>Bacteria</taxon>
        <taxon>Pseudomonadati</taxon>
        <taxon>Pseudomonadota</taxon>
        <taxon>Alphaproteobacteria</taxon>
        <taxon>Hyphomicrobiales</taxon>
        <taxon>Nitrobacteraceae</taxon>
        <taxon>Rhodopseudomonas</taxon>
    </lineage>
</organism>
<feature type="chain" id="PRO_1000019968" description="Probable cytosol aminopeptidase">
    <location>
        <begin position="1"/>
        <end position="498"/>
    </location>
</feature>
<feature type="active site" evidence="1">
    <location>
        <position position="275"/>
    </location>
</feature>
<feature type="active site" evidence="1">
    <location>
        <position position="349"/>
    </location>
</feature>
<feature type="binding site" evidence="1">
    <location>
        <position position="263"/>
    </location>
    <ligand>
        <name>Mn(2+)</name>
        <dbReference type="ChEBI" id="CHEBI:29035"/>
        <label>2</label>
    </ligand>
</feature>
<feature type="binding site" evidence="1">
    <location>
        <position position="268"/>
    </location>
    <ligand>
        <name>Mn(2+)</name>
        <dbReference type="ChEBI" id="CHEBI:29035"/>
        <label>1</label>
    </ligand>
</feature>
<feature type="binding site" evidence="1">
    <location>
        <position position="268"/>
    </location>
    <ligand>
        <name>Mn(2+)</name>
        <dbReference type="ChEBI" id="CHEBI:29035"/>
        <label>2</label>
    </ligand>
</feature>
<feature type="binding site" evidence="1">
    <location>
        <position position="286"/>
    </location>
    <ligand>
        <name>Mn(2+)</name>
        <dbReference type="ChEBI" id="CHEBI:29035"/>
        <label>2</label>
    </ligand>
</feature>
<feature type="binding site" evidence="1">
    <location>
        <position position="345"/>
    </location>
    <ligand>
        <name>Mn(2+)</name>
        <dbReference type="ChEBI" id="CHEBI:29035"/>
        <label>1</label>
    </ligand>
</feature>
<feature type="binding site" evidence="1">
    <location>
        <position position="347"/>
    </location>
    <ligand>
        <name>Mn(2+)</name>
        <dbReference type="ChEBI" id="CHEBI:29035"/>
        <label>1</label>
    </ligand>
</feature>
<feature type="binding site" evidence="1">
    <location>
        <position position="347"/>
    </location>
    <ligand>
        <name>Mn(2+)</name>
        <dbReference type="ChEBI" id="CHEBI:29035"/>
        <label>2</label>
    </ligand>
</feature>
<gene>
    <name evidence="1" type="primary">pepA</name>
    <name type="ordered locus">RPE_3291</name>
</gene>
<evidence type="ECO:0000255" key="1">
    <source>
        <dbReference type="HAMAP-Rule" id="MF_00181"/>
    </source>
</evidence>
<keyword id="KW-0031">Aminopeptidase</keyword>
<keyword id="KW-0963">Cytoplasm</keyword>
<keyword id="KW-0378">Hydrolase</keyword>
<keyword id="KW-0464">Manganese</keyword>
<keyword id="KW-0479">Metal-binding</keyword>
<keyword id="KW-0645">Protease</keyword>
<dbReference type="EC" id="3.4.11.1" evidence="1"/>
<dbReference type="EC" id="3.4.11.10" evidence="1"/>
<dbReference type="EMBL" id="CP000463">
    <property type="protein sequence ID" value="ABJ07224.1"/>
    <property type="molecule type" value="Genomic_DNA"/>
</dbReference>
<dbReference type="SMR" id="Q07LG0"/>
<dbReference type="STRING" id="316055.RPE_3291"/>
<dbReference type="KEGG" id="rpe:RPE_3291"/>
<dbReference type="eggNOG" id="COG0260">
    <property type="taxonomic scope" value="Bacteria"/>
</dbReference>
<dbReference type="HOGENOM" id="CLU_013734_6_0_5"/>
<dbReference type="OrthoDB" id="9809354at2"/>
<dbReference type="GO" id="GO:0005737">
    <property type="term" value="C:cytoplasm"/>
    <property type="evidence" value="ECO:0007669"/>
    <property type="project" value="UniProtKB-SubCell"/>
</dbReference>
<dbReference type="GO" id="GO:0030145">
    <property type="term" value="F:manganese ion binding"/>
    <property type="evidence" value="ECO:0007669"/>
    <property type="project" value="UniProtKB-UniRule"/>
</dbReference>
<dbReference type="GO" id="GO:0070006">
    <property type="term" value="F:metalloaminopeptidase activity"/>
    <property type="evidence" value="ECO:0007669"/>
    <property type="project" value="InterPro"/>
</dbReference>
<dbReference type="GO" id="GO:0006508">
    <property type="term" value="P:proteolysis"/>
    <property type="evidence" value="ECO:0007669"/>
    <property type="project" value="UniProtKB-KW"/>
</dbReference>
<dbReference type="CDD" id="cd00433">
    <property type="entry name" value="Peptidase_M17"/>
    <property type="match status" value="1"/>
</dbReference>
<dbReference type="Gene3D" id="3.40.220.10">
    <property type="entry name" value="Leucine Aminopeptidase, subunit E, domain 1"/>
    <property type="match status" value="1"/>
</dbReference>
<dbReference type="Gene3D" id="3.40.630.10">
    <property type="entry name" value="Zn peptidases"/>
    <property type="match status" value="1"/>
</dbReference>
<dbReference type="HAMAP" id="MF_00181">
    <property type="entry name" value="Cytosol_peptidase_M17"/>
    <property type="match status" value="1"/>
</dbReference>
<dbReference type="InterPro" id="IPR011356">
    <property type="entry name" value="Leucine_aapep/pepB"/>
</dbReference>
<dbReference type="InterPro" id="IPR043472">
    <property type="entry name" value="Macro_dom-like"/>
</dbReference>
<dbReference type="InterPro" id="IPR000819">
    <property type="entry name" value="Peptidase_M17_C"/>
</dbReference>
<dbReference type="InterPro" id="IPR023042">
    <property type="entry name" value="Peptidase_M17_leu_NH2_pept"/>
</dbReference>
<dbReference type="InterPro" id="IPR008283">
    <property type="entry name" value="Peptidase_M17_N"/>
</dbReference>
<dbReference type="NCBIfam" id="NF002073">
    <property type="entry name" value="PRK00913.1-2"/>
    <property type="match status" value="1"/>
</dbReference>
<dbReference type="NCBIfam" id="NF002074">
    <property type="entry name" value="PRK00913.1-4"/>
    <property type="match status" value="1"/>
</dbReference>
<dbReference type="NCBIfam" id="NF002075">
    <property type="entry name" value="PRK00913.2-2"/>
    <property type="match status" value="1"/>
</dbReference>
<dbReference type="NCBIfam" id="NF002077">
    <property type="entry name" value="PRK00913.2-4"/>
    <property type="match status" value="1"/>
</dbReference>
<dbReference type="NCBIfam" id="NF002083">
    <property type="entry name" value="PRK00913.3-5"/>
    <property type="match status" value="1"/>
</dbReference>
<dbReference type="PANTHER" id="PTHR11963:SF23">
    <property type="entry name" value="CYTOSOL AMINOPEPTIDASE"/>
    <property type="match status" value="1"/>
</dbReference>
<dbReference type="PANTHER" id="PTHR11963">
    <property type="entry name" value="LEUCINE AMINOPEPTIDASE-RELATED"/>
    <property type="match status" value="1"/>
</dbReference>
<dbReference type="Pfam" id="PF00883">
    <property type="entry name" value="Peptidase_M17"/>
    <property type="match status" value="1"/>
</dbReference>
<dbReference type="Pfam" id="PF02789">
    <property type="entry name" value="Peptidase_M17_N"/>
    <property type="match status" value="1"/>
</dbReference>
<dbReference type="PRINTS" id="PR00481">
    <property type="entry name" value="LAMNOPPTDASE"/>
</dbReference>
<dbReference type="SUPFAM" id="SSF52949">
    <property type="entry name" value="Macro domain-like"/>
    <property type="match status" value="1"/>
</dbReference>
<dbReference type="SUPFAM" id="SSF53187">
    <property type="entry name" value="Zn-dependent exopeptidases"/>
    <property type="match status" value="1"/>
</dbReference>
<dbReference type="PROSITE" id="PS00631">
    <property type="entry name" value="CYTOSOL_AP"/>
    <property type="match status" value="1"/>
</dbReference>
<protein>
    <recommendedName>
        <fullName evidence="1">Probable cytosol aminopeptidase</fullName>
        <ecNumber evidence="1">3.4.11.1</ecNumber>
    </recommendedName>
    <alternativeName>
        <fullName evidence="1">Leucine aminopeptidase</fullName>
        <shortName evidence="1">LAP</shortName>
        <ecNumber evidence="1">3.4.11.10</ecNumber>
    </alternativeName>
    <alternativeName>
        <fullName evidence="1">Leucyl aminopeptidase</fullName>
    </alternativeName>
</protein>
<comment type="function">
    <text evidence="1">Presumably involved in the processing and regular turnover of intracellular proteins. Catalyzes the removal of unsubstituted N-terminal amino acids from various peptides.</text>
</comment>
<comment type="catalytic activity">
    <reaction evidence="1">
        <text>Release of an N-terminal amino acid, Xaa-|-Yaa-, in which Xaa is preferably Leu, but may be other amino acids including Pro although not Arg or Lys, and Yaa may be Pro. Amino acid amides and methyl esters are also readily hydrolyzed, but rates on arylamides are exceedingly low.</text>
        <dbReference type="EC" id="3.4.11.1"/>
    </reaction>
</comment>
<comment type="catalytic activity">
    <reaction evidence="1">
        <text>Release of an N-terminal amino acid, preferentially leucine, but not glutamic or aspartic acids.</text>
        <dbReference type="EC" id="3.4.11.10"/>
    </reaction>
</comment>
<comment type="cofactor">
    <cofactor evidence="1">
        <name>Mn(2+)</name>
        <dbReference type="ChEBI" id="CHEBI:29035"/>
    </cofactor>
    <text evidence="1">Binds 2 manganese ions per subunit.</text>
</comment>
<comment type="subcellular location">
    <subcellularLocation>
        <location evidence="1">Cytoplasm</location>
    </subcellularLocation>
</comment>
<comment type="similarity">
    <text evidence="1">Belongs to the peptidase M17 family.</text>
</comment>
<reference key="1">
    <citation type="submission" date="2006-09" db="EMBL/GenBank/DDBJ databases">
        <title>Complete sequence of Rhodopseudomonas palustris BisA53.</title>
        <authorList>
            <consortium name="US DOE Joint Genome Institute"/>
            <person name="Copeland A."/>
            <person name="Lucas S."/>
            <person name="Lapidus A."/>
            <person name="Barry K."/>
            <person name="Detter J.C."/>
            <person name="Glavina del Rio T."/>
            <person name="Hammon N."/>
            <person name="Israni S."/>
            <person name="Dalin E."/>
            <person name="Tice H."/>
            <person name="Pitluck S."/>
            <person name="Chain P."/>
            <person name="Malfatti S."/>
            <person name="Shin M."/>
            <person name="Vergez L."/>
            <person name="Schmutz J."/>
            <person name="Larimer F."/>
            <person name="Land M."/>
            <person name="Hauser L."/>
            <person name="Pelletier D.A."/>
            <person name="Kyrpides N."/>
            <person name="Kim E."/>
            <person name="Harwood C.S."/>
            <person name="Oda Y."/>
            <person name="Richardson P."/>
        </authorList>
    </citation>
    <scope>NUCLEOTIDE SEQUENCE [LARGE SCALE GENOMIC DNA]</scope>
    <source>
        <strain>BisA53</strain>
    </source>
</reference>
<proteinExistence type="inferred from homology"/>